<sequence length="279" mass="29886">MMTAETTGRAACLIGWPAAHSRSPLIHHYWLRLHGITGGYSIEAIPPEGFAEFVMHLSTHGFAGANVTIPHKERALQLTEPDDRARAVGAANTLYYEGAVLRSTNTDVEGFISNLDVAAPSWDRTGDALVLGAGGASRAVVFGLVERGIGRIHLANRTVERARVLADQFGATVIPAAWNTLGDLLPRVGLLVNTTSLGMKGQPPLDIELALLPRDAVVADLVYVPLETPLLSAARARGLRTADGLGMLLHQAVRGFELWFGLRPAVTQELRALVEADLL</sequence>
<proteinExistence type="inferred from homology"/>
<protein>
    <recommendedName>
        <fullName evidence="1">Shikimate dehydrogenase (NADP(+))</fullName>
        <shortName evidence="1">SDH</shortName>
        <ecNumber evidence="1">1.1.1.25</ecNumber>
    </recommendedName>
</protein>
<keyword id="KW-0028">Amino-acid biosynthesis</keyword>
<keyword id="KW-0057">Aromatic amino acid biosynthesis</keyword>
<keyword id="KW-0521">NADP</keyword>
<keyword id="KW-0560">Oxidoreductase</keyword>
<keyword id="KW-1185">Reference proteome</keyword>
<feature type="chain" id="PRO_0000325138" description="Shikimate dehydrogenase (NADP(+))">
    <location>
        <begin position="1"/>
        <end position="279"/>
    </location>
</feature>
<feature type="active site" description="Proton acceptor" evidence="1">
    <location>
        <position position="72"/>
    </location>
</feature>
<feature type="binding site" evidence="1">
    <location>
        <begin position="21"/>
        <end position="23"/>
    </location>
    <ligand>
        <name>shikimate</name>
        <dbReference type="ChEBI" id="CHEBI:36208"/>
    </ligand>
</feature>
<feature type="binding site" evidence="1">
    <location>
        <position position="68"/>
    </location>
    <ligand>
        <name>shikimate</name>
        <dbReference type="ChEBI" id="CHEBI:36208"/>
    </ligand>
</feature>
<feature type="binding site" evidence="1">
    <location>
        <position position="83"/>
    </location>
    <ligand>
        <name>NADP(+)</name>
        <dbReference type="ChEBI" id="CHEBI:58349"/>
    </ligand>
</feature>
<feature type="binding site" evidence="1">
    <location>
        <position position="92"/>
    </location>
    <ligand>
        <name>shikimate</name>
        <dbReference type="ChEBI" id="CHEBI:36208"/>
    </ligand>
</feature>
<feature type="binding site" evidence="1">
    <location>
        <position position="107"/>
    </location>
    <ligand>
        <name>shikimate</name>
        <dbReference type="ChEBI" id="CHEBI:36208"/>
    </ligand>
</feature>
<feature type="binding site" evidence="1">
    <location>
        <begin position="132"/>
        <end position="136"/>
    </location>
    <ligand>
        <name>NADP(+)</name>
        <dbReference type="ChEBI" id="CHEBI:58349"/>
    </ligand>
</feature>
<feature type="binding site" evidence="1">
    <location>
        <begin position="156"/>
        <end position="161"/>
    </location>
    <ligand>
        <name>NADP(+)</name>
        <dbReference type="ChEBI" id="CHEBI:58349"/>
    </ligand>
</feature>
<feature type="binding site" evidence="1">
    <location>
        <position position="221"/>
    </location>
    <ligand>
        <name>NADP(+)</name>
        <dbReference type="ChEBI" id="CHEBI:58349"/>
    </ligand>
</feature>
<feature type="binding site" evidence="1">
    <location>
        <position position="223"/>
    </location>
    <ligand>
        <name>shikimate</name>
        <dbReference type="ChEBI" id="CHEBI:36208"/>
    </ligand>
</feature>
<feature type="binding site" evidence="1">
    <location>
        <position position="244"/>
    </location>
    <ligand>
        <name>NADP(+)</name>
        <dbReference type="ChEBI" id="CHEBI:58349"/>
    </ligand>
</feature>
<dbReference type="EC" id="1.1.1.25" evidence="1"/>
<dbReference type="EMBL" id="CP000115">
    <property type="protein sequence ID" value="ABA06227.1"/>
    <property type="molecule type" value="Genomic_DNA"/>
</dbReference>
<dbReference type="RefSeq" id="WP_011316149.1">
    <property type="nucleotide sequence ID" value="NC_007406.1"/>
</dbReference>
<dbReference type="SMR" id="Q3SNB4"/>
<dbReference type="STRING" id="323098.Nwi_2977"/>
<dbReference type="KEGG" id="nwi:Nwi_2977"/>
<dbReference type="eggNOG" id="COG0169">
    <property type="taxonomic scope" value="Bacteria"/>
</dbReference>
<dbReference type="HOGENOM" id="CLU_044063_2_0_5"/>
<dbReference type="OrthoDB" id="9792692at2"/>
<dbReference type="UniPathway" id="UPA00053">
    <property type="reaction ID" value="UER00087"/>
</dbReference>
<dbReference type="Proteomes" id="UP000002531">
    <property type="component" value="Chromosome"/>
</dbReference>
<dbReference type="GO" id="GO:0005829">
    <property type="term" value="C:cytosol"/>
    <property type="evidence" value="ECO:0007669"/>
    <property type="project" value="TreeGrafter"/>
</dbReference>
<dbReference type="GO" id="GO:0050661">
    <property type="term" value="F:NADP binding"/>
    <property type="evidence" value="ECO:0007669"/>
    <property type="project" value="InterPro"/>
</dbReference>
<dbReference type="GO" id="GO:0004764">
    <property type="term" value="F:shikimate 3-dehydrogenase (NADP+) activity"/>
    <property type="evidence" value="ECO:0007669"/>
    <property type="project" value="UniProtKB-UniRule"/>
</dbReference>
<dbReference type="GO" id="GO:0008652">
    <property type="term" value="P:amino acid biosynthetic process"/>
    <property type="evidence" value="ECO:0007669"/>
    <property type="project" value="UniProtKB-KW"/>
</dbReference>
<dbReference type="GO" id="GO:0009073">
    <property type="term" value="P:aromatic amino acid family biosynthetic process"/>
    <property type="evidence" value="ECO:0007669"/>
    <property type="project" value="UniProtKB-KW"/>
</dbReference>
<dbReference type="GO" id="GO:0009423">
    <property type="term" value="P:chorismate biosynthetic process"/>
    <property type="evidence" value="ECO:0007669"/>
    <property type="project" value="UniProtKB-UniRule"/>
</dbReference>
<dbReference type="GO" id="GO:0019632">
    <property type="term" value="P:shikimate metabolic process"/>
    <property type="evidence" value="ECO:0007669"/>
    <property type="project" value="InterPro"/>
</dbReference>
<dbReference type="CDD" id="cd01065">
    <property type="entry name" value="NAD_bind_Shikimate_DH"/>
    <property type="match status" value="1"/>
</dbReference>
<dbReference type="Gene3D" id="3.40.50.10860">
    <property type="entry name" value="Leucine Dehydrogenase, chain A, domain 1"/>
    <property type="match status" value="1"/>
</dbReference>
<dbReference type="Gene3D" id="3.40.50.720">
    <property type="entry name" value="NAD(P)-binding Rossmann-like Domain"/>
    <property type="match status" value="1"/>
</dbReference>
<dbReference type="HAMAP" id="MF_00222">
    <property type="entry name" value="Shikimate_DH_AroE"/>
    <property type="match status" value="1"/>
</dbReference>
<dbReference type="InterPro" id="IPR046346">
    <property type="entry name" value="Aminoacid_DH-like_N_sf"/>
</dbReference>
<dbReference type="InterPro" id="IPR036291">
    <property type="entry name" value="NAD(P)-bd_dom_sf"/>
</dbReference>
<dbReference type="InterPro" id="IPR041121">
    <property type="entry name" value="SDH_C"/>
</dbReference>
<dbReference type="InterPro" id="IPR011342">
    <property type="entry name" value="Shikimate_DH"/>
</dbReference>
<dbReference type="InterPro" id="IPR013708">
    <property type="entry name" value="Shikimate_DH-bd_N"/>
</dbReference>
<dbReference type="InterPro" id="IPR022893">
    <property type="entry name" value="Shikimate_DH_fam"/>
</dbReference>
<dbReference type="InterPro" id="IPR006151">
    <property type="entry name" value="Shikm_DH/Glu-tRNA_Rdtase"/>
</dbReference>
<dbReference type="NCBIfam" id="TIGR00507">
    <property type="entry name" value="aroE"/>
    <property type="match status" value="1"/>
</dbReference>
<dbReference type="NCBIfam" id="NF001312">
    <property type="entry name" value="PRK00258.1-4"/>
    <property type="match status" value="1"/>
</dbReference>
<dbReference type="PANTHER" id="PTHR21089:SF1">
    <property type="entry name" value="BIFUNCTIONAL 3-DEHYDROQUINATE DEHYDRATASE_SHIKIMATE DEHYDROGENASE, CHLOROPLASTIC"/>
    <property type="match status" value="1"/>
</dbReference>
<dbReference type="PANTHER" id="PTHR21089">
    <property type="entry name" value="SHIKIMATE DEHYDROGENASE"/>
    <property type="match status" value="1"/>
</dbReference>
<dbReference type="Pfam" id="PF18317">
    <property type="entry name" value="SDH_C"/>
    <property type="match status" value="1"/>
</dbReference>
<dbReference type="Pfam" id="PF01488">
    <property type="entry name" value="Shikimate_DH"/>
    <property type="match status" value="1"/>
</dbReference>
<dbReference type="Pfam" id="PF08501">
    <property type="entry name" value="Shikimate_dh_N"/>
    <property type="match status" value="1"/>
</dbReference>
<dbReference type="SUPFAM" id="SSF53223">
    <property type="entry name" value="Aminoacid dehydrogenase-like, N-terminal domain"/>
    <property type="match status" value="1"/>
</dbReference>
<dbReference type="SUPFAM" id="SSF51735">
    <property type="entry name" value="NAD(P)-binding Rossmann-fold domains"/>
    <property type="match status" value="1"/>
</dbReference>
<accession>Q3SNB4</accession>
<gene>
    <name evidence="1" type="primary">aroE</name>
    <name type="ordered locus">Nwi_2977</name>
</gene>
<evidence type="ECO:0000255" key="1">
    <source>
        <dbReference type="HAMAP-Rule" id="MF_00222"/>
    </source>
</evidence>
<comment type="function">
    <text evidence="1">Involved in the biosynthesis of the chorismate, which leads to the biosynthesis of aromatic amino acids. Catalyzes the reversible NADPH linked reduction of 3-dehydroshikimate (DHSA) to yield shikimate (SA).</text>
</comment>
<comment type="catalytic activity">
    <reaction evidence="1">
        <text>shikimate + NADP(+) = 3-dehydroshikimate + NADPH + H(+)</text>
        <dbReference type="Rhea" id="RHEA:17737"/>
        <dbReference type="ChEBI" id="CHEBI:15378"/>
        <dbReference type="ChEBI" id="CHEBI:16630"/>
        <dbReference type="ChEBI" id="CHEBI:36208"/>
        <dbReference type="ChEBI" id="CHEBI:57783"/>
        <dbReference type="ChEBI" id="CHEBI:58349"/>
        <dbReference type="EC" id="1.1.1.25"/>
    </reaction>
</comment>
<comment type="pathway">
    <text evidence="1">Metabolic intermediate biosynthesis; chorismate biosynthesis; chorismate from D-erythrose 4-phosphate and phosphoenolpyruvate: step 4/7.</text>
</comment>
<comment type="subunit">
    <text evidence="1">Homodimer.</text>
</comment>
<comment type="similarity">
    <text evidence="1">Belongs to the shikimate dehydrogenase family.</text>
</comment>
<organism>
    <name type="scientific">Nitrobacter winogradskyi (strain ATCC 25391 / DSM 10237 / CIP 104748 / NCIMB 11846 / Nb-255)</name>
    <dbReference type="NCBI Taxonomy" id="323098"/>
    <lineage>
        <taxon>Bacteria</taxon>
        <taxon>Pseudomonadati</taxon>
        <taxon>Pseudomonadota</taxon>
        <taxon>Alphaproteobacteria</taxon>
        <taxon>Hyphomicrobiales</taxon>
        <taxon>Nitrobacteraceae</taxon>
        <taxon>Nitrobacter</taxon>
    </lineage>
</organism>
<name>AROE_NITWN</name>
<reference key="1">
    <citation type="journal article" date="2006" name="Appl. Environ. Microbiol.">
        <title>Genome sequence of the chemolithoautotrophic nitrite-oxidizing bacterium Nitrobacter winogradskyi Nb-255.</title>
        <authorList>
            <person name="Starkenburg S.R."/>
            <person name="Chain P.S.G."/>
            <person name="Sayavedra-Soto L.A."/>
            <person name="Hauser L."/>
            <person name="Land M.L."/>
            <person name="Larimer F.W."/>
            <person name="Malfatti S.A."/>
            <person name="Klotz M.G."/>
            <person name="Bottomley P.J."/>
            <person name="Arp D.J."/>
            <person name="Hickey W.J."/>
        </authorList>
    </citation>
    <scope>NUCLEOTIDE SEQUENCE [LARGE SCALE GENOMIC DNA]</scope>
    <source>
        <strain>ATCC 25391 / DSM 10237 / CIP 104748 / NCIMB 11846 / Nb-255</strain>
    </source>
</reference>